<name>OTC_NEISI</name>
<sequence>DQGAGVTYLEPSASQIGHKESIKDTARVLGRMYDGIEYRGFGQEVVEELAKYAGVPVFNGLTNEFHPTQMLADALTMREHSGKPLNQTAFAYVGDARYNMANSLLVLGAKLGMDVRIGAPKTLWPSENIVARARAVAEETGGKILLTENAEEAVKGVDFIHTDVWVSMGEPKEAWQERIDLLKDYRVTPELMEASGNPQVKFMHCLPAFHNRETKVGEWIYETFGLNGVEVT</sequence>
<keyword id="KW-0028">Amino-acid biosynthesis</keyword>
<keyword id="KW-0055">Arginine biosynthesis</keyword>
<keyword id="KW-0963">Cytoplasm</keyword>
<keyword id="KW-0808">Transferase</keyword>
<proteinExistence type="inferred from homology"/>
<comment type="function">
    <text evidence="1">Reversibly catalyzes the transfer of the carbamoyl group from carbamoyl phosphate (CP) to the N(epsilon) atom of ornithine (ORN) to produce L-citrulline.</text>
</comment>
<comment type="catalytic activity">
    <reaction>
        <text>carbamoyl phosphate + L-ornithine = L-citrulline + phosphate + H(+)</text>
        <dbReference type="Rhea" id="RHEA:19513"/>
        <dbReference type="ChEBI" id="CHEBI:15378"/>
        <dbReference type="ChEBI" id="CHEBI:43474"/>
        <dbReference type="ChEBI" id="CHEBI:46911"/>
        <dbReference type="ChEBI" id="CHEBI:57743"/>
        <dbReference type="ChEBI" id="CHEBI:58228"/>
        <dbReference type="EC" id="2.1.3.3"/>
    </reaction>
</comment>
<comment type="pathway">
    <text>Amino-acid biosynthesis; L-arginine biosynthesis; L-arginine from L-ornithine and carbamoyl phosphate: step 1/3.</text>
</comment>
<comment type="subcellular location">
    <subcellularLocation>
        <location evidence="1">Cytoplasm</location>
    </subcellularLocation>
</comment>
<comment type="similarity">
    <text evidence="2">Belongs to the aspartate/ornithine carbamoyltransferase superfamily. OTCase family.</text>
</comment>
<protein>
    <recommendedName>
        <fullName>Ornithine carbamoyltransferase</fullName>
        <shortName>OTCase</shortName>
        <ecNumber>2.1.3.3</ecNumber>
    </recommendedName>
</protein>
<feature type="chain" id="PRO_0000112971" description="Ornithine carbamoyltransferase">
    <location>
        <begin position="1" status="less than"/>
        <end position="232" status="greater than"/>
    </location>
</feature>
<feature type="binding site" evidence="1">
    <location>
        <position position="15"/>
    </location>
    <ligand>
        <name>carbamoyl phosphate</name>
        <dbReference type="ChEBI" id="CHEBI:58228"/>
    </ligand>
</feature>
<feature type="binding site" evidence="1">
    <location>
        <position position="39"/>
    </location>
    <ligand>
        <name>carbamoyl phosphate</name>
        <dbReference type="ChEBI" id="CHEBI:58228"/>
    </ligand>
</feature>
<feature type="binding site" evidence="1">
    <location>
        <begin position="66"/>
        <end position="69"/>
    </location>
    <ligand>
        <name>carbamoyl phosphate</name>
        <dbReference type="ChEBI" id="CHEBI:58228"/>
    </ligand>
</feature>
<feature type="binding site" evidence="1">
    <location>
        <position position="99"/>
    </location>
    <ligand>
        <name>L-ornithine</name>
        <dbReference type="ChEBI" id="CHEBI:46911"/>
    </ligand>
</feature>
<feature type="binding site" evidence="1">
    <location>
        <position position="163"/>
    </location>
    <ligand>
        <name>L-ornithine</name>
        <dbReference type="ChEBI" id="CHEBI:46911"/>
    </ligand>
</feature>
<feature type="binding site" evidence="1">
    <location>
        <begin position="167"/>
        <end position="168"/>
    </location>
    <ligand>
        <name>L-ornithine</name>
        <dbReference type="ChEBI" id="CHEBI:46911"/>
    </ligand>
</feature>
<feature type="binding site" evidence="1">
    <location>
        <begin position="204"/>
        <end position="207"/>
    </location>
    <ligand>
        <name>carbamoyl phosphate</name>
        <dbReference type="ChEBI" id="CHEBI:58228"/>
    </ligand>
</feature>
<feature type="binding site" evidence="1">
    <location>
        <position position="232"/>
    </location>
    <ligand>
        <name>carbamoyl phosphate</name>
        <dbReference type="ChEBI" id="CHEBI:58228"/>
    </ligand>
</feature>
<feature type="site" description="Important for structural integrity" evidence="1">
    <location>
        <position position="79"/>
    </location>
</feature>
<feature type="non-terminal residue">
    <location>
        <position position="1"/>
    </location>
</feature>
<feature type="non-terminal residue">
    <location>
        <position position="232"/>
    </location>
</feature>
<organism>
    <name type="scientific">Neisseria sicca</name>
    <dbReference type="NCBI Taxonomy" id="490"/>
    <lineage>
        <taxon>Bacteria</taxon>
        <taxon>Pseudomonadati</taxon>
        <taxon>Pseudomonadota</taxon>
        <taxon>Betaproteobacteria</taxon>
        <taxon>Neisseriales</taxon>
        <taxon>Neisseriaceae</taxon>
        <taxon>Neisseria</taxon>
    </lineage>
</organism>
<accession>O86412</accession>
<evidence type="ECO:0000250" key="1"/>
<evidence type="ECO:0000305" key="2"/>
<reference key="1">
    <citation type="journal article" date="1999" name="Mol. Biol. Evol.">
        <title>Networks and groups within the genus Neisseria: analysis of argF, recA, rho, and 16S rRNA sequences from human Neisseria species.</title>
        <authorList>
            <person name="Smith N.H."/>
            <person name="Holmes E.C."/>
            <person name="Donovan G.M."/>
            <person name="Carpenter G.A."/>
            <person name="Spratt B.G."/>
        </authorList>
    </citation>
    <scope>NUCLEOTIDE SEQUENCE [GENOMIC DNA]</scope>
    <source>
        <strain>ATCC 29256 / DSM 17713 / CCUG 23929 / CIP 103345 / LMG 5290 / NRL 30016</strain>
    </source>
</reference>
<gene>
    <name type="primary">argF</name>
</gene>
<dbReference type="EC" id="2.1.3.3"/>
<dbReference type="EMBL" id="AJ223893">
    <property type="protein sequence ID" value="CAA11624.1"/>
    <property type="molecule type" value="Genomic_DNA"/>
</dbReference>
<dbReference type="SMR" id="O86412"/>
<dbReference type="UniPathway" id="UPA00068">
    <property type="reaction ID" value="UER00112"/>
</dbReference>
<dbReference type="GO" id="GO:0005737">
    <property type="term" value="C:cytoplasm"/>
    <property type="evidence" value="ECO:0007669"/>
    <property type="project" value="UniProtKB-SubCell"/>
</dbReference>
<dbReference type="GO" id="GO:0016597">
    <property type="term" value="F:amino acid binding"/>
    <property type="evidence" value="ECO:0007669"/>
    <property type="project" value="InterPro"/>
</dbReference>
<dbReference type="GO" id="GO:0004585">
    <property type="term" value="F:ornithine carbamoyltransferase activity"/>
    <property type="evidence" value="ECO:0007669"/>
    <property type="project" value="UniProtKB-EC"/>
</dbReference>
<dbReference type="GO" id="GO:0042450">
    <property type="term" value="P:arginine biosynthetic process via ornithine"/>
    <property type="evidence" value="ECO:0007669"/>
    <property type="project" value="TreeGrafter"/>
</dbReference>
<dbReference type="GO" id="GO:0019240">
    <property type="term" value="P:citrulline biosynthetic process"/>
    <property type="evidence" value="ECO:0007669"/>
    <property type="project" value="TreeGrafter"/>
</dbReference>
<dbReference type="GO" id="GO:0006526">
    <property type="term" value="P:L-arginine biosynthetic process"/>
    <property type="evidence" value="ECO:0007669"/>
    <property type="project" value="UniProtKB-UniPathway"/>
</dbReference>
<dbReference type="FunFam" id="3.40.50.1370:FF:000008">
    <property type="entry name" value="Ornithine carbamoyltransferase"/>
    <property type="match status" value="1"/>
</dbReference>
<dbReference type="Gene3D" id="3.40.50.1370">
    <property type="entry name" value="Aspartate/ornithine carbamoyltransferase"/>
    <property type="match status" value="2"/>
</dbReference>
<dbReference type="InterPro" id="IPR006132">
    <property type="entry name" value="Asp/Orn_carbamoyltranf_P-bd"/>
</dbReference>
<dbReference type="InterPro" id="IPR006130">
    <property type="entry name" value="Asp/Orn_carbamoylTrfase"/>
</dbReference>
<dbReference type="InterPro" id="IPR036901">
    <property type="entry name" value="Asp/Orn_carbamoylTrfase_sf"/>
</dbReference>
<dbReference type="InterPro" id="IPR006131">
    <property type="entry name" value="Asp_carbamoyltransf_Asp/Orn-bd"/>
</dbReference>
<dbReference type="InterPro" id="IPR002292">
    <property type="entry name" value="Orn/put_carbamltrans"/>
</dbReference>
<dbReference type="NCBIfam" id="TIGR00658">
    <property type="entry name" value="orni_carb_tr"/>
    <property type="match status" value="1"/>
</dbReference>
<dbReference type="PANTHER" id="PTHR45753:SF2">
    <property type="entry name" value="ORNITHINE CARBAMOYLTRANSFERASE"/>
    <property type="match status" value="1"/>
</dbReference>
<dbReference type="PANTHER" id="PTHR45753">
    <property type="entry name" value="ORNITHINE CARBAMOYLTRANSFERASE, MITOCHONDRIAL"/>
    <property type="match status" value="1"/>
</dbReference>
<dbReference type="Pfam" id="PF00185">
    <property type="entry name" value="OTCace"/>
    <property type="match status" value="1"/>
</dbReference>
<dbReference type="Pfam" id="PF02729">
    <property type="entry name" value="OTCace_N"/>
    <property type="match status" value="1"/>
</dbReference>
<dbReference type="PRINTS" id="PR00100">
    <property type="entry name" value="AOTCASE"/>
</dbReference>
<dbReference type="PRINTS" id="PR00102">
    <property type="entry name" value="OTCASE"/>
</dbReference>
<dbReference type="SUPFAM" id="SSF53671">
    <property type="entry name" value="Aspartate/ornithine carbamoyltransferase"/>
    <property type="match status" value="1"/>
</dbReference>